<organism>
    <name type="scientific">Linum usitatissimum</name>
    <name type="common">Flax</name>
    <name type="synonym">Linum humile</name>
    <dbReference type="NCBI Taxonomy" id="4006"/>
    <lineage>
        <taxon>Eukaryota</taxon>
        <taxon>Viridiplantae</taxon>
        <taxon>Streptophyta</taxon>
        <taxon>Embryophyta</taxon>
        <taxon>Tracheophyta</taxon>
        <taxon>Spermatophyta</taxon>
        <taxon>Magnoliopsida</taxon>
        <taxon>eudicotyledons</taxon>
        <taxon>Gunneridae</taxon>
        <taxon>Pentapetalae</taxon>
        <taxon>rosids</taxon>
        <taxon>fabids</taxon>
        <taxon>Malpighiales</taxon>
        <taxon>Linaceae</taxon>
        <taxon>Linum</taxon>
    </lineage>
</organism>
<evidence type="ECO:0000250" key="1"/>
<evidence type="ECO:0000269" key="2">
    <source>
    </source>
</evidence>
<evidence type="ECO:0000269" key="3">
    <source>
    </source>
</evidence>
<evidence type="ECO:0000269" key="4">
    <source>
    </source>
</evidence>
<evidence type="ECO:0000269" key="5">
    <source ref="5"/>
</evidence>
<evidence type="ECO:0000305" key="6"/>
<evidence type="ECO:0007829" key="7">
    <source>
        <dbReference type="PDB" id="7VB3"/>
    </source>
</evidence>
<comment type="function">
    <text evidence="5">Involved in the catabolism of cyanogenic glycosides. Naturally occurring substrates are the aliphatic acetone cyanohydrin and butan-2-one cyanohydrin, which are the aglycones of the cyanogenic glycosides linamarin, lotaustralin, linustatin and neolinustatin. Can use various aliphatic ketones and aldehydes as substrates, but not aromatic ketones.</text>
</comment>
<comment type="catalytic activity">
    <reaction evidence="3 5">
        <text>(2R)-2-hydroxy-2-methylbutanenitrile = butan-2-one + hydrogen cyanide</text>
        <dbReference type="Rhea" id="RHEA:28170"/>
        <dbReference type="ChEBI" id="CHEBI:18407"/>
        <dbReference type="ChEBI" id="CHEBI:28398"/>
        <dbReference type="ChEBI" id="CHEBI:60908"/>
        <dbReference type="EC" id="4.1.2.46"/>
    </reaction>
</comment>
<comment type="cofactor">
    <cofactor evidence="5">
        <name>Zn(2+)</name>
        <dbReference type="ChEBI" id="CHEBI:29105"/>
    </cofactor>
    <text evidence="5">Binds 2 Zn(2+) ions per subunit.</text>
</comment>
<comment type="biophysicochemical properties">
    <kinetics>
        <KM evidence="2 4">1.9 mM for acetone cyanohydrin</KM>
        <Vmax evidence="2 4">71.0 umol/min/mg enzyme with acetone cyanohydrin as substrate</Vmax>
    </kinetics>
    <phDependence>
        <text evidence="2 4">Optimum pH is 5.5.</text>
    </phDependence>
</comment>
<comment type="subunit">
    <text evidence="2">Homodimer.</text>
</comment>
<comment type="miscellaneous">
    <text>In contrast to the enzyme from rosaceae, this enzyme is not glycosylated and does not contain FAD. Not inhibited by reagents interfering with Zn(2+) coordination.</text>
</comment>
<comment type="similarity">
    <text evidence="6">Belongs to the zinc-containing alcohol dehydrogenase family.</text>
</comment>
<feature type="chain" id="PRO_0000415393" description="Aliphatic (R)-hydroxynitrile lyase">
    <location>
        <begin position="1"/>
        <end position="422"/>
    </location>
</feature>
<feature type="binding site" evidence="1">
    <location>
        <position position="63"/>
    </location>
    <ligand>
        <name>Zn(2+)</name>
        <dbReference type="ChEBI" id="CHEBI:29105"/>
        <label>1</label>
        <note>catalytic</note>
    </ligand>
</feature>
<feature type="binding site" evidence="1">
    <location>
        <position position="85"/>
    </location>
    <ligand>
        <name>Zn(2+)</name>
        <dbReference type="ChEBI" id="CHEBI:29105"/>
        <label>1</label>
        <note>catalytic</note>
    </ligand>
</feature>
<feature type="binding site" evidence="1">
    <location>
        <position position="115"/>
    </location>
    <ligand>
        <name>Zn(2+)</name>
        <dbReference type="ChEBI" id="CHEBI:29105"/>
        <label>2</label>
    </ligand>
</feature>
<feature type="binding site" evidence="1">
    <location>
        <position position="118"/>
    </location>
    <ligand>
        <name>Zn(2+)</name>
        <dbReference type="ChEBI" id="CHEBI:29105"/>
        <label>2</label>
    </ligand>
</feature>
<feature type="binding site" evidence="1">
    <location>
        <position position="121"/>
    </location>
    <ligand>
        <name>Zn(2+)</name>
        <dbReference type="ChEBI" id="CHEBI:29105"/>
        <label>2</label>
    </ligand>
</feature>
<feature type="binding site" evidence="1">
    <location>
        <position position="129"/>
    </location>
    <ligand>
        <name>Zn(2+)</name>
        <dbReference type="ChEBI" id="CHEBI:29105"/>
        <label>2</label>
    </ligand>
</feature>
<feature type="binding site" evidence="1">
    <location>
        <position position="199"/>
    </location>
    <ligand>
        <name>Zn(2+)</name>
        <dbReference type="ChEBI" id="CHEBI:29105"/>
        <label>1</label>
        <note>catalytic</note>
    </ligand>
</feature>
<feature type="mutagenesis site" description="Loss of activity." evidence="5">
    <original>C</original>
    <variation>A</variation>
    <location>
        <position position="63"/>
    </location>
</feature>
<feature type="mutagenesis site" description="Loss of activity." evidence="5">
    <original>T</original>
    <variation>A</variation>
    <location>
        <position position="65"/>
    </location>
</feature>
<feature type="mutagenesis site" description="Loss of activity." evidence="5">
    <original>G</original>
    <variation>A</variation>
    <location>
        <position position="84"/>
    </location>
</feature>
<feature type="mutagenesis site" description="Loss of activity." evidence="5">
    <original>H</original>
    <variation>A</variation>
    <location>
        <position position="85"/>
    </location>
</feature>
<feature type="mutagenesis site" description="Loss of activity." evidence="5">
    <original>G</original>
    <variation>A</variation>
    <location>
        <position position="95"/>
    </location>
</feature>
<feature type="mutagenesis site" description="90% reduction of activity." evidence="5">
    <original>G</original>
    <variation>A</variation>
    <location>
        <position position="104"/>
    </location>
</feature>
<feature type="mutagenesis site" description="Loss of activity." evidence="5">
    <original>C</original>
    <variation>A</variation>
    <location>
        <position position="118"/>
    </location>
</feature>
<feature type="mutagenesis site" description="Loss of activity." evidence="5">
    <original>C</original>
    <variation>A</variation>
    <location>
        <position position="129"/>
    </location>
</feature>
<feature type="mutagenesis site" description="Loss of activity." evidence="5">
    <original>C</original>
    <variation>A</variation>
    <location>
        <position position="199"/>
    </location>
</feature>
<feature type="sequence conflict" description="In Ref. 2; AAB81956." evidence="6" ref="2">
    <original>V</original>
    <variation>T</variation>
    <location>
        <position position="117"/>
    </location>
</feature>
<feature type="strand" evidence="7">
    <location>
        <begin position="17"/>
        <end position="24"/>
    </location>
</feature>
<feature type="helix" evidence="7">
    <location>
        <begin position="34"/>
        <end position="37"/>
    </location>
</feature>
<feature type="strand" evidence="7">
    <location>
        <begin position="38"/>
        <end position="45"/>
    </location>
</feature>
<feature type="strand" evidence="7">
    <location>
        <begin position="52"/>
        <end position="61"/>
    </location>
</feature>
<feature type="helix" evidence="7">
    <location>
        <begin position="64"/>
        <end position="70"/>
    </location>
</feature>
<feature type="turn" evidence="7">
    <location>
        <begin position="71"/>
        <end position="74"/>
    </location>
</feature>
<feature type="strand" evidence="7">
    <location>
        <begin position="80"/>
        <end position="82"/>
    </location>
</feature>
<feature type="strand" evidence="7">
    <location>
        <begin position="87"/>
        <end position="94"/>
    </location>
</feature>
<feature type="strand" evidence="7">
    <location>
        <begin position="106"/>
        <end position="108"/>
    </location>
</feature>
<feature type="helix" evidence="7">
    <location>
        <begin position="119"/>
        <end position="123"/>
    </location>
</feature>
<feature type="strand" evidence="7">
    <location>
        <begin position="130"/>
        <end position="132"/>
    </location>
</feature>
<feature type="strand" evidence="7">
    <location>
        <begin position="146"/>
        <end position="150"/>
    </location>
</feature>
<feature type="strand" evidence="7">
    <location>
        <begin position="156"/>
        <end position="158"/>
    </location>
</feature>
<feature type="strand" evidence="7">
    <location>
        <begin position="162"/>
        <end position="164"/>
    </location>
</feature>
<feature type="strand" evidence="7">
    <location>
        <begin position="167"/>
        <end position="175"/>
    </location>
</feature>
<feature type="helix" evidence="7">
    <location>
        <begin position="176"/>
        <end position="178"/>
    </location>
</feature>
<feature type="turn" evidence="7">
    <location>
        <begin position="183"/>
        <end position="185"/>
    </location>
</feature>
<feature type="helix" evidence="7">
    <location>
        <begin position="191"/>
        <end position="197"/>
    </location>
</feature>
<feature type="helix" evidence="7">
    <location>
        <begin position="200"/>
        <end position="209"/>
    </location>
</feature>
<feature type="strand" evidence="7">
    <location>
        <begin position="219"/>
        <end position="223"/>
    </location>
</feature>
<feature type="helix" evidence="7">
    <location>
        <begin position="227"/>
        <end position="238"/>
    </location>
</feature>
<feature type="strand" evidence="7">
    <location>
        <begin position="242"/>
        <end position="249"/>
    </location>
</feature>
<feature type="helix" evidence="7">
    <location>
        <begin position="251"/>
        <end position="259"/>
    </location>
</feature>
<feature type="strand" evidence="7">
    <location>
        <begin position="263"/>
        <end position="267"/>
    </location>
</feature>
<feature type="helix" evidence="7">
    <location>
        <begin position="268"/>
        <end position="270"/>
    </location>
</feature>
<feature type="helix" evidence="7">
    <location>
        <begin position="277"/>
        <end position="282"/>
    </location>
</feature>
<feature type="helix" evidence="7">
    <location>
        <begin position="286"/>
        <end position="288"/>
    </location>
</feature>
<feature type="strand" evidence="7">
    <location>
        <begin position="291"/>
        <end position="296"/>
    </location>
</feature>
<feature type="helix" evidence="7">
    <location>
        <begin position="301"/>
        <end position="310"/>
    </location>
</feature>
<feature type="turn" evidence="7">
    <location>
        <begin position="313"/>
        <end position="315"/>
    </location>
</feature>
<feature type="strand" evidence="7">
    <location>
        <begin position="316"/>
        <end position="320"/>
    </location>
</feature>
<feature type="helix" evidence="7">
    <location>
        <begin position="327"/>
        <end position="329"/>
    </location>
</feature>
<feature type="strand" evidence="7">
    <location>
        <begin position="330"/>
        <end position="334"/>
    </location>
</feature>
<feature type="helix" evidence="7">
    <location>
        <begin position="335"/>
        <end position="339"/>
    </location>
</feature>
<feature type="strand" evidence="7">
    <location>
        <begin position="343"/>
        <end position="346"/>
    </location>
</feature>
<feature type="helix" evidence="7">
    <location>
        <begin position="349"/>
        <end position="351"/>
    </location>
</feature>
<feature type="turn" evidence="7">
    <location>
        <begin position="354"/>
        <end position="357"/>
    </location>
</feature>
<feature type="helix" evidence="7">
    <location>
        <begin position="358"/>
        <end position="365"/>
    </location>
</feature>
<feature type="helix" evidence="7">
    <location>
        <begin position="368"/>
        <end position="378"/>
    </location>
</feature>
<feature type="turn" evidence="7">
    <location>
        <begin position="382"/>
        <end position="385"/>
    </location>
</feature>
<feature type="strand" evidence="7">
    <location>
        <begin position="388"/>
        <end position="392"/>
    </location>
</feature>
<feature type="helix" evidence="7">
    <location>
        <begin position="393"/>
        <end position="395"/>
    </location>
</feature>
<feature type="helix" evidence="7">
    <location>
        <begin position="397"/>
        <end position="406"/>
    </location>
</feature>
<feature type="strand" evidence="7">
    <location>
        <begin position="416"/>
        <end position="418"/>
    </location>
</feature>
<proteinExistence type="evidence at protein level"/>
<protein>
    <recommendedName>
        <fullName>Aliphatic (R)-hydroxynitrile lyase</fullName>
        <shortName>LuHNL</shortName>
        <ecNumber>4.1.2.46</ecNumber>
    </recommendedName>
</protein>
<name>AHNL_LINUS</name>
<sequence length="422" mass="45783">MASLPVSFAKPDKNGVITCKAIMLKEAKLPGMSYADTVQIIDIQVDPPQNVELRVKMLCASVCRTDILTIEGFMAPTQFPKINGHEGVGIIESMGPDTKNFKVGDVIVAPTLGECQVCSSCRSGRTNFCQNYGANESALEPDGTSRFSYIDSDGKKKLLYYKLGCSTWTQYMVVDSNYATKLNEIAPELPPPHGSILSCAFATGYGAVWLDAAVQEGDSVAIFGVGSVGISAVIAAKELKAKQIIVVDRNEYKLKMAMELGATHCINSEKLPEGVTPSQAVRKLTPKEVGVDASIESSGYDVFMNEAMKAAIHGKAKTVITGEGIYENDRIFFDFKDFLFGGNVVGNVTGRVRIHSDFPGLLRKAQEPVIRAGMDKILGYDAATMKCKYEVDIREGTPALLKALEEVENVDCVKLVIKLNDY</sequence>
<dbReference type="EC" id="4.1.2.46"/>
<dbReference type="EMBL" id="Y09084">
    <property type="protein sequence ID" value="CAA70304.1"/>
    <property type="molecule type" value="mRNA"/>
</dbReference>
<dbReference type="EMBL" id="AF024588">
    <property type="protein sequence ID" value="AAB81956.1"/>
    <property type="molecule type" value="mRNA"/>
</dbReference>
<dbReference type="PIR" id="T07967">
    <property type="entry name" value="T07967"/>
</dbReference>
<dbReference type="PDB" id="7VB3">
    <property type="method" value="X-ray"/>
    <property type="resolution" value="1.48 A"/>
    <property type="chains" value="A/B/C/D=1-422"/>
</dbReference>
<dbReference type="PDB" id="7VB5">
    <property type="method" value="X-ray"/>
    <property type="resolution" value="1.58 A"/>
    <property type="chains" value="A/B/C/D=1-422"/>
</dbReference>
<dbReference type="PDB" id="7VB6">
    <property type="method" value="X-ray"/>
    <property type="resolution" value="1.74 A"/>
    <property type="chains" value="A/B/C/D=1-422"/>
</dbReference>
<dbReference type="PDBsum" id="7VB3"/>
<dbReference type="PDBsum" id="7VB5"/>
<dbReference type="PDBsum" id="7VB6"/>
<dbReference type="SMR" id="P93243"/>
<dbReference type="KEGG" id="ag:CAA70304"/>
<dbReference type="BioCyc" id="MetaCyc:MONOMER-15903"/>
<dbReference type="BRENDA" id="4.1.2.46">
    <property type="organism ID" value="3037"/>
</dbReference>
<dbReference type="GO" id="GO:0005829">
    <property type="term" value="C:cytosol"/>
    <property type="evidence" value="ECO:0007669"/>
    <property type="project" value="TreeGrafter"/>
</dbReference>
<dbReference type="GO" id="GO:0052919">
    <property type="term" value="F:aliphatic (R)-hydroxynitrile lyase activity"/>
    <property type="evidence" value="ECO:0007669"/>
    <property type="project" value="UniProtKB-EC"/>
</dbReference>
<dbReference type="GO" id="GO:0051903">
    <property type="term" value="F:S-(hydroxymethyl)glutathione dehydrogenase [NAD(P)+] activity"/>
    <property type="evidence" value="ECO:0007669"/>
    <property type="project" value="TreeGrafter"/>
</dbReference>
<dbReference type="GO" id="GO:0008270">
    <property type="term" value="F:zinc ion binding"/>
    <property type="evidence" value="ECO:0007669"/>
    <property type="project" value="TreeGrafter"/>
</dbReference>
<dbReference type="GO" id="GO:0046294">
    <property type="term" value="P:formaldehyde catabolic process"/>
    <property type="evidence" value="ECO:0007669"/>
    <property type="project" value="TreeGrafter"/>
</dbReference>
<dbReference type="FunFam" id="3.40.50.720:FF:000003">
    <property type="entry name" value="S-(hydroxymethyl)glutathione dehydrogenase"/>
    <property type="match status" value="1"/>
</dbReference>
<dbReference type="Gene3D" id="3.90.180.10">
    <property type="entry name" value="Medium-chain alcohol dehydrogenases, catalytic domain"/>
    <property type="match status" value="1"/>
</dbReference>
<dbReference type="Gene3D" id="3.40.50.720">
    <property type="entry name" value="NAD(P)-binding Rossmann-like Domain"/>
    <property type="match status" value="1"/>
</dbReference>
<dbReference type="InterPro" id="IPR013149">
    <property type="entry name" value="ADH-like_C"/>
</dbReference>
<dbReference type="InterPro" id="IPR013154">
    <property type="entry name" value="ADH-like_N"/>
</dbReference>
<dbReference type="InterPro" id="IPR011032">
    <property type="entry name" value="GroES-like_sf"/>
</dbReference>
<dbReference type="InterPro" id="IPR036291">
    <property type="entry name" value="NAD(P)-bd_dom_sf"/>
</dbReference>
<dbReference type="PANTHER" id="PTHR43880">
    <property type="entry name" value="ALCOHOL DEHYDROGENASE"/>
    <property type="match status" value="1"/>
</dbReference>
<dbReference type="PANTHER" id="PTHR43880:SF38">
    <property type="entry name" value="ALCOHOL DEHYDROGENASE-RELATED"/>
    <property type="match status" value="1"/>
</dbReference>
<dbReference type="Pfam" id="PF08240">
    <property type="entry name" value="ADH_N"/>
    <property type="match status" value="1"/>
</dbReference>
<dbReference type="Pfam" id="PF00107">
    <property type="entry name" value="ADH_zinc_N"/>
    <property type="match status" value="1"/>
</dbReference>
<dbReference type="SUPFAM" id="SSF50129">
    <property type="entry name" value="GroES-like"/>
    <property type="match status" value="1"/>
</dbReference>
<dbReference type="SUPFAM" id="SSF51735">
    <property type="entry name" value="NAD(P)-binding Rossmann-fold domains"/>
    <property type="match status" value="1"/>
</dbReference>
<accession>P93243</accession>
<accession>O22574</accession>
<keyword id="KW-0002">3D-structure</keyword>
<keyword id="KW-0903">Direct protein sequencing</keyword>
<keyword id="KW-0456">Lyase</keyword>
<keyword id="KW-0479">Metal-binding</keyword>
<keyword id="KW-0862">Zinc</keyword>
<reference key="1">
    <citation type="journal article" date="1997" name="J. Biol. Chem.">
        <title>Molecular cloning of acetone cyanohydrin lyase from flax (Linum usitatissimum). Definition of a novel class of hydroxynitrile lyases.</title>
        <authorList>
            <person name="Trummler K."/>
            <person name="Wajant H."/>
        </authorList>
    </citation>
    <scope>NUCLEOTIDE SEQUENCE [MRNA]</scope>
    <scope>CHARACTERIZATION</scope>
    <scope>BIOPHYSICOCHEMICAL PROPERTIES</scope>
</reference>
<reference key="2">
    <citation type="journal article" date="1999" name="J. Mol. Catal., B Enzym.">
        <title>Cloning and expression of (R)-hydroxynitrile lyase from Linum usitatissimum (flax).</title>
        <authorList>
            <person name="Breithaupt H."/>
            <person name="Pohl M."/>
            <person name="Boenigk W."/>
            <person name="Heim P."/>
            <person name="Schimz K.-L."/>
            <person name="Kula M.-R."/>
        </authorList>
    </citation>
    <scope>NUCLEOTIDE SEQUENCE [MRNA]</scope>
    <scope>PROTEIN SEQUENCE OF 15-47</scope>
</reference>
<reference key="3">
    <citation type="journal article" date="1993" name="Biotechnol. Appl. Biochem.">
        <title>Improved purification of an (R)-oxynitrilase from Linum usitatissimum (flax) and investigation of the substrate range.</title>
        <authorList>
            <person name="Albrecht J."/>
            <person name="Jansen I."/>
            <person name="Kula M.R."/>
        </authorList>
    </citation>
    <scope>PROTEIN SEQUENCE OF 9-47</scope>
    <scope>CATALYTIC ACTIVITY</scope>
</reference>
<reference key="4">
    <citation type="journal article" date="1988" name="Arch. Biochem. Biophys.">
        <title>Purification and characterization of acetone cyanohydrin lyase from Linum usitatissimum.</title>
        <authorList>
            <person name="Xu L.L."/>
            <person name="Singh B.K."/>
            <person name="Conn E.E."/>
        </authorList>
    </citation>
    <scope>CHARACTERIZATION</scope>
    <scope>BIOPHYSICOCHEMICAL PROPERTIES</scope>
    <scope>SUBUNIT</scope>
</reference>
<reference key="5">
    <citation type="journal article" date="1998" name="Plant Sci.">
        <title>Expression of the Zn(2+)-containing hydroxynitrile lyase from flax (Linum usitatissimum) in Pichia pastoris - utilization of the recombinant enzyme for enzymatic analysis and site-directed mutagenesis.</title>
        <authorList>
            <person name="Trummler K."/>
            <person name="Roos J."/>
            <person name="Schwaneberg U."/>
            <person name="Effenberger F."/>
            <person name="Foerster S."/>
            <person name="Pfizenmaier K."/>
            <person name="Wajant H."/>
        </authorList>
    </citation>
    <scope>FUNCTION</scope>
    <scope>CATALYTIC ACTIVITY</scope>
    <scope>COFACTOR</scope>
    <scope>MUTAGENESIS OF CYS-63; THR-65; GLY-84; HIS-85; GLY-95; GLY-104; CYS-118; CYS-129 AND CYS-199</scope>
</reference>